<dbReference type="EC" id="3.1.3.48"/>
<dbReference type="EMBL" id="D78610">
    <property type="protein sequence ID" value="BAA20333.1"/>
    <property type="molecule type" value="mRNA"/>
</dbReference>
<dbReference type="EMBL" id="D78613">
    <property type="protein sequence ID" value="BAA11433.1"/>
    <property type="molecule type" value="mRNA"/>
</dbReference>
<dbReference type="EMBL" id="CH473953">
    <property type="protein sequence ID" value="EDM11793.1"/>
    <property type="molecule type" value="Genomic_DNA"/>
</dbReference>
<dbReference type="EMBL" id="CH473953">
    <property type="protein sequence ID" value="EDM11794.1"/>
    <property type="molecule type" value="Genomic_DNA"/>
</dbReference>
<dbReference type="EMBL" id="BC166573">
    <property type="protein sequence ID" value="AAI66573.1"/>
    <property type="status" value="ALT_INIT"/>
    <property type="molecule type" value="mRNA"/>
</dbReference>
<dbReference type="EMBL" id="CV110063">
    <property type="status" value="NOT_ANNOTATED_CDS"/>
    <property type="molecule type" value="mRNA"/>
</dbReference>
<dbReference type="RefSeq" id="NP_446219.1">
    <molecule id="B2GV87-1"/>
    <property type="nucleotide sequence ID" value="NM_053767.3"/>
</dbReference>
<dbReference type="RefSeq" id="XP_006230511.1">
    <molecule id="B2GV87-1"/>
    <property type="nucleotide sequence ID" value="XM_006230449.5"/>
</dbReference>
<dbReference type="RefSeq" id="XP_008758193.1">
    <property type="nucleotide sequence ID" value="XM_008759971.2"/>
</dbReference>
<dbReference type="RefSeq" id="XP_008758194.1">
    <property type="nucleotide sequence ID" value="XM_008759972.2"/>
</dbReference>
<dbReference type="RefSeq" id="XP_063119170.1">
    <molecule id="B2GV87-1"/>
    <property type="nucleotide sequence ID" value="XM_063263100.1"/>
</dbReference>
<dbReference type="SMR" id="B2GV87"/>
<dbReference type="FunCoup" id="B2GV87">
    <property type="interactions" value="2842"/>
</dbReference>
<dbReference type="IntAct" id="B2GV87">
    <property type="interactions" value="1"/>
</dbReference>
<dbReference type="MINT" id="B2GV87"/>
<dbReference type="STRING" id="10116.ENSRNOP00000021359"/>
<dbReference type="GlyCosmos" id="B2GV87">
    <property type="glycosylation" value="2 sites, No reported glycans"/>
</dbReference>
<dbReference type="GlyGen" id="B2GV87">
    <property type="glycosylation" value="2 sites"/>
</dbReference>
<dbReference type="iPTMnet" id="B2GV87"/>
<dbReference type="PhosphoSitePlus" id="B2GV87"/>
<dbReference type="PaxDb" id="10116-ENSRNOP00000021359"/>
<dbReference type="Ensembl" id="ENSRNOT00000110825.1">
    <molecule id="B2GV87-2"/>
    <property type="protein sequence ID" value="ENSRNOP00000078012.1"/>
    <property type="gene ID" value="ENSRNOG00000015717.9"/>
</dbReference>
<dbReference type="GeneID" id="114767"/>
<dbReference type="KEGG" id="rno:114767"/>
<dbReference type="UCSC" id="RGD:620771">
    <molecule id="B2GV87-1"/>
    <property type="organism name" value="rat"/>
</dbReference>
<dbReference type="AGR" id="RGD:620771"/>
<dbReference type="CTD" id="5791"/>
<dbReference type="RGD" id="620771">
    <property type="gene designation" value="Ptpre"/>
</dbReference>
<dbReference type="VEuPathDB" id="HostDB:ENSRNOG00000015717"/>
<dbReference type="eggNOG" id="KOG4228">
    <property type="taxonomic scope" value="Eukaryota"/>
</dbReference>
<dbReference type="GeneTree" id="ENSGT00940000156570"/>
<dbReference type="HOGENOM" id="CLU_001645_8_2_1"/>
<dbReference type="InParanoid" id="B2GV87"/>
<dbReference type="PhylomeDB" id="B2GV87"/>
<dbReference type="PRO" id="PR:B2GV87"/>
<dbReference type="Proteomes" id="UP000002494">
    <property type="component" value="Chromosome 1"/>
</dbReference>
<dbReference type="Proteomes" id="UP000234681">
    <property type="component" value="Chromosome 1"/>
</dbReference>
<dbReference type="Bgee" id="ENSRNOG00000015717">
    <property type="expression patterns" value="Expressed in lung and 19 other cell types or tissues"/>
</dbReference>
<dbReference type="GO" id="GO:0005737">
    <property type="term" value="C:cytoplasm"/>
    <property type="evidence" value="ECO:0000266"/>
    <property type="project" value="RGD"/>
</dbReference>
<dbReference type="GO" id="GO:0005634">
    <property type="term" value="C:nucleus"/>
    <property type="evidence" value="ECO:0000266"/>
    <property type="project" value="RGD"/>
</dbReference>
<dbReference type="GO" id="GO:0005886">
    <property type="term" value="C:plasma membrane"/>
    <property type="evidence" value="ECO:0000266"/>
    <property type="project" value="RGD"/>
</dbReference>
<dbReference type="GO" id="GO:0042802">
    <property type="term" value="F:identical protein binding"/>
    <property type="evidence" value="ECO:0000266"/>
    <property type="project" value="RGD"/>
</dbReference>
<dbReference type="GO" id="GO:0004725">
    <property type="term" value="F:protein tyrosine phosphatase activity"/>
    <property type="evidence" value="ECO:0000266"/>
    <property type="project" value="RGD"/>
</dbReference>
<dbReference type="GO" id="GO:0007185">
    <property type="term" value="P:cell surface receptor protein tyrosine phosphatase signaling pathway"/>
    <property type="evidence" value="ECO:0000266"/>
    <property type="project" value="RGD"/>
</dbReference>
<dbReference type="GO" id="GO:0046627">
    <property type="term" value="P:negative regulation of insulin receptor signaling pathway"/>
    <property type="evidence" value="ECO:0000314"/>
    <property type="project" value="UniProtKB"/>
</dbReference>
<dbReference type="GO" id="GO:0033003">
    <property type="term" value="P:regulation of mast cell activation"/>
    <property type="evidence" value="ECO:0000266"/>
    <property type="project" value="RGD"/>
</dbReference>
<dbReference type="GO" id="GO:0007165">
    <property type="term" value="P:signal transduction"/>
    <property type="evidence" value="ECO:0000318"/>
    <property type="project" value="GO_Central"/>
</dbReference>
<dbReference type="CDD" id="cd14620">
    <property type="entry name" value="R-PTPc-E-1"/>
    <property type="match status" value="1"/>
</dbReference>
<dbReference type="FunFam" id="3.90.190.10:FF:000007">
    <property type="entry name" value="Receptor-type tyrosine-protein phosphatase alpha"/>
    <property type="match status" value="1"/>
</dbReference>
<dbReference type="FunFam" id="3.90.190.10:FF:000022">
    <property type="entry name" value="Receptor-type tyrosine-protein phosphatase epsilon"/>
    <property type="match status" value="1"/>
</dbReference>
<dbReference type="Gene3D" id="3.90.190.10">
    <property type="entry name" value="Protein tyrosine phosphatase superfamily"/>
    <property type="match status" value="2"/>
</dbReference>
<dbReference type="InterPro" id="IPR029021">
    <property type="entry name" value="Prot-tyrosine_phosphatase-like"/>
</dbReference>
<dbReference type="InterPro" id="IPR050348">
    <property type="entry name" value="Protein-Tyr_Phosphatase"/>
</dbReference>
<dbReference type="InterPro" id="IPR000242">
    <property type="entry name" value="PTP_cat"/>
</dbReference>
<dbReference type="InterPro" id="IPR016130">
    <property type="entry name" value="Tyr_Pase_AS"/>
</dbReference>
<dbReference type="InterPro" id="IPR003595">
    <property type="entry name" value="Tyr_Pase_cat"/>
</dbReference>
<dbReference type="InterPro" id="IPR000387">
    <property type="entry name" value="Tyr_Pase_dom"/>
</dbReference>
<dbReference type="InterPro" id="IPR016336">
    <property type="entry name" value="Tyr_Pase_rcpt_a/e-type"/>
</dbReference>
<dbReference type="PANTHER" id="PTHR19134">
    <property type="entry name" value="RECEPTOR-TYPE TYROSINE-PROTEIN PHOSPHATASE"/>
    <property type="match status" value="1"/>
</dbReference>
<dbReference type="PANTHER" id="PTHR19134:SF499">
    <property type="entry name" value="RECEPTOR-TYPE TYROSINE-PROTEIN PHOSPHATASE EPSILON"/>
    <property type="match status" value="1"/>
</dbReference>
<dbReference type="Pfam" id="PF00102">
    <property type="entry name" value="Y_phosphatase"/>
    <property type="match status" value="2"/>
</dbReference>
<dbReference type="PIRSF" id="PIRSF002006">
    <property type="entry name" value="PTPR_alpha_epsilon"/>
    <property type="match status" value="1"/>
</dbReference>
<dbReference type="PRINTS" id="PR00700">
    <property type="entry name" value="PRTYPHPHTASE"/>
</dbReference>
<dbReference type="SMART" id="SM00194">
    <property type="entry name" value="PTPc"/>
    <property type="match status" value="2"/>
</dbReference>
<dbReference type="SMART" id="SM00404">
    <property type="entry name" value="PTPc_motif"/>
    <property type="match status" value="2"/>
</dbReference>
<dbReference type="SUPFAM" id="SSF52799">
    <property type="entry name" value="(Phosphotyrosine protein) phosphatases II"/>
    <property type="match status" value="2"/>
</dbReference>
<dbReference type="PROSITE" id="PS00383">
    <property type="entry name" value="TYR_PHOSPHATASE_1"/>
    <property type="match status" value="2"/>
</dbReference>
<dbReference type="PROSITE" id="PS50056">
    <property type="entry name" value="TYR_PHOSPHATASE_2"/>
    <property type="match status" value="2"/>
</dbReference>
<dbReference type="PROSITE" id="PS50055">
    <property type="entry name" value="TYR_PHOSPHATASE_PTP"/>
    <property type="match status" value="2"/>
</dbReference>
<organism>
    <name type="scientific">Rattus norvegicus</name>
    <name type="common">Rat</name>
    <dbReference type="NCBI Taxonomy" id="10116"/>
    <lineage>
        <taxon>Eukaryota</taxon>
        <taxon>Metazoa</taxon>
        <taxon>Chordata</taxon>
        <taxon>Craniata</taxon>
        <taxon>Vertebrata</taxon>
        <taxon>Euteleostomi</taxon>
        <taxon>Mammalia</taxon>
        <taxon>Eutheria</taxon>
        <taxon>Euarchontoglires</taxon>
        <taxon>Glires</taxon>
        <taxon>Rodentia</taxon>
        <taxon>Myomorpha</taxon>
        <taxon>Muroidea</taxon>
        <taxon>Muridae</taxon>
        <taxon>Murinae</taxon>
        <taxon>Rattus</taxon>
    </lineage>
</organism>
<accession>B2GV87</accession>
<accession>Q63476</accession>
<accession>Q63477</accession>
<gene>
    <name type="primary">Ptpre</name>
    <name type="synonym">Ptpe</name>
</gene>
<feature type="signal peptide" evidence="3">
    <location>
        <begin position="1"/>
        <end position="22"/>
    </location>
</feature>
<feature type="chain" id="PRO_0000389638" description="Receptor-type tyrosine-protein phosphatase epsilon">
    <location>
        <begin position="23"/>
        <end position="699"/>
    </location>
</feature>
<feature type="topological domain" description="Extracellular" evidence="3">
    <location>
        <begin position="23"/>
        <end position="47"/>
    </location>
</feature>
<feature type="transmembrane region" description="Helical" evidence="3">
    <location>
        <begin position="48"/>
        <end position="68"/>
    </location>
</feature>
<feature type="topological domain" description="Cytoplasmic" evidence="3">
    <location>
        <begin position="69"/>
        <end position="699"/>
    </location>
</feature>
<feature type="domain" description="Tyrosine-protein phosphatase 1" evidence="4">
    <location>
        <begin position="134"/>
        <end position="393"/>
    </location>
</feature>
<feature type="domain" description="Tyrosine-protein phosphatase 2" evidence="4">
    <location>
        <begin position="425"/>
        <end position="688"/>
    </location>
</feature>
<feature type="region of interest" description="Disordered" evidence="6">
    <location>
        <begin position="20"/>
        <end position="41"/>
    </location>
</feature>
<feature type="compositionally biased region" description="Low complexity" evidence="6">
    <location>
        <begin position="20"/>
        <end position="36"/>
    </location>
</feature>
<feature type="active site" description="Phosphocysteine intermediate" evidence="1">
    <location>
        <position position="334"/>
    </location>
</feature>
<feature type="active site" description="Phosphocysteine intermediate" evidence="1">
    <location>
        <position position="629"/>
    </location>
</feature>
<feature type="binding site" evidence="1">
    <location>
        <position position="302"/>
    </location>
    <ligand>
        <name>substrate</name>
    </ligand>
</feature>
<feature type="binding site" evidence="1">
    <location>
        <begin position="334"/>
        <end position="340"/>
    </location>
    <ligand>
        <name>substrate</name>
    </ligand>
</feature>
<feature type="binding site" evidence="1">
    <location>
        <position position="378"/>
    </location>
    <ligand>
        <name>substrate</name>
    </ligand>
</feature>
<feature type="modified residue" description="Phosphotyrosine" evidence="2">
    <location>
        <position position="695"/>
    </location>
</feature>
<feature type="glycosylation site" description="N-linked (GlcNAc...) asparagine" evidence="3">
    <location>
        <position position="23"/>
    </location>
</feature>
<feature type="glycosylation site" description="N-linked (GlcNAc...) asparagine" evidence="3">
    <location>
        <position position="31"/>
    </location>
</feature>
<feature type="splice variant" id="VSP_038488" description="In isoform 3." evidence="10">
    <location>
        <begin position="1"/>
        <end position="84"/>
    </location>
</feature>
<feature type="splice variant" id="VSP_038489" description="In isoform 2." evidence="9">
    <original>MEPFCPLLLASFSLSLATAGQGNDTTPTESNWTSTTAGPPDPGTSQPLLTWLLLPLLLLLFLLAAYFFR</original>
    <variation>MSSRKNFSRLTW</variation>
    <location>
        <begin position="1"/>
        <end position="69"/>
    </location>
</feature>
<feature type="sequence conflict" description="In Ref. 1; BAA11433." evidence="11" ref="1">
    <original>F</original>
    <variation>L</variation>
    <location>
        <position position="4"/>
    </location>
</feature>
<feature type="sequence conflict" description="In Ref. 1; BAA20333." evidence="11" ref="1">
    <original>K</original>
    <variation>T</variation>
    <location>
        <position position="573"/>
    </location>
</feature>
<feature type="sequence conflict" description="In Ref. 1; BAA20333." evidence="11" ref="1">
    <original>G</original>
    <variation>A</variation>
    <location>
        <position position="593"/>
    </location>
</feature>
<feature type="sequence conflict" description="In Ref. 1; BAA20333." evidence="11" ref="1">
    <original>IA</original>
    <variation>LS</variation>
    <location>
        <begin position="610"/>
        <end position="611"/>
    </location>
</feature>
<feature type="sequence conflict" description="In Ref. 1; BAA20333." evidence="11" ref="1">
    <original>G</original>
    <variation>D</variation>
    <location>
        <position position="621"/>
    </location>
</feature>
<protein>
    <recommendedName>
        <fullName>Receptor-type tyrosine-protein phosphatase epsilon</fullName>
        <shortName>Protein-tyrosine phosphatase epsilon</shortName>
        <shortName>R-PTP-epsilon</shortName>
        <ecNumber>3.1.3.48</ecNumber>
    </recommendedName>
</protein>
<sequence length="699" mass="80734">MEPFCPLLLASFSLSLATAGQGNDTTPTESNWTSTTAGPPDPGTSQPLLTWLLLPLLLLLFLLAAYFFRFRKQRKAVVNSNDKKMPNGILEEQEQQRVMLLSRSPSGPKKYFPIPVEHLEEEIRVRSADDCKRFREEFNSLPSGHIQGTFELANKEENREKNRYPNILPNDHCRVILSQLDGIPCSDYINASYIDGYKEKNKFIAAQGPKQETVNDFWRMVWEQRSATIVMLTNLKERKEEKCYQYWPDQGCWTYGNIRVCVEDCVVLVDYTIRKFCIHPQLPDSCKAPRLVSQLHFTSWPDFGVPFTPIGMLKFLKKVKTLNPSHAGPIVVHCSAGVGRTGTFIVIDAMMDMIHSEQKVDVFEFVSRIRNQRPQMVQTDVQYTFIYQALLEYYLYGDTELDVSSLERHLQTLHGTATHFDKIGLEEEFRKLTNVRIMKENMRTGNLPANMKKARVIQIIPYDFNRVILSMKRGQEFTDYINASFIDGYRQKDYFMATQGPLAHTVEDFWRMVWEWKSHTIVMLTEVQEREQDKCYQYWPTEGSVTHGDITIEIKSDTLSEAISIRDFLVTFKQPLARQEEQVRMVRQFHFHGWPEVGIPTEGKGMIDLIAAVQKQQQQTGNHPITVHCSAGAGRTGTFIALSNILERVKAEGLLDVFQAVKSLRLQRPHMVQTLEQYEFCYKVVQDFIDIFSDYANFK</sequence>
<name>PTPRE_RAT</name>
<proteinExistence type="evidence at transcript level"/>
<keyword id="KW-0024">Alternative initiation</keyword>
<keyword id="KW-0877">Alternative promoter usage</keyword>
<keyword id="KW-1003">Cell membrane</keyword>
<keyword id="KW-0963">Cytoplasm</keyword>
<keyword id="KW-0325">Glycoprotein</keyword>
<keyword id="KW-0378">Hydrolase</keyword>
<keyword id="KW-0472">Membrane</keyword>
<keyword id="KW-0597">Phosphoprotein</keyword>
<keyword id="KW-0904">Protein phosphatase</keyword>
<keyword id="KW-1185">Reference proteome</keyword>
<keyword id="KW-0677">Repeat</keyword>
<keyword id="KW-0732">Signal</keyword>
<keyword id="KW-0812">Transmembrane</keyword>
<keyword id="KW-1133">Transmembrane helix</keyword>
<comment type="function">
    <text evidence="1">Isoform 1 plays a critical role in signaling transduction pathways and phosphoprotein network topology in red blood cells. May play a role in osteoclast formation and function (By similarity). Acts as a negative regulator of insulin receptor (IR) signaling and is involved in insulin-induced glucose metabolism mainly through direct dephosphorylation and inactivation of IR in hepatocytes and liver.</text>
</comment>
<comment type="function">
    <text evidence="1">Isoform 2 acts as a negative regulator of insulin receptor (IR) signaling in skeletal muscle. Regulates insulin-induced tyrosine phosphorylation of insulin receptor (IR) and insulin receptor substrate 1 (IRS-1), phosphorylation of protein kinase B and glycogen synthase kinase-3 and insulin induced stimulation of glucose uptake (By similarity).</text>
</comment>
<comment type="function">
    <text evidence="1">Isoform 1 and isoform 2 act as a negative regulator of FceRI-mediated signal transduction leading to cytokine production and degranulation, most likely by acting at the level of SYK to affect downstream events such as phosphorylation of SLP76 and LAT and mobilization of Ca(2+).</text>
</comment>
<comment type="catalytic activity">
    <reaction evidence="5">
        <text>O-phospho-L-tyrosyl-[protein] + H2O = L-tyrosyl-[protein] + phosphate</text>
        <dbReference type="Rhea" id="RHEA:10684"/>
        <dbReference type="Rhea" id="RHEA-COMP:10136"/>
        <dbReference type="Rhea" id="RHEA-COMP:20101"/>
        <dbReference type="ChEBI" id="CHEBI:15377"/>
        <dbReference type="ChEBI" id="CHEBI:43474"/>
        <dbReference type="ChEBI" id="CHEBI:46858"/>
        <dbReference type="ChEBI" id="CHEBI:61978"/>
        <dbReference type="EC" id="3.1.3.48"/>
    </reaction>
</comment>
<comment type="subunit">
    <text evidence="1">Monomer. Isoform 2: Homodimer. Can form oligomers. Dimerization is increased by oxidative stress and decreased by EGFR. Isoform 2 interacts with GRB2 (By similarity).</text>
</comment>
<comment type="subcellular location">
    <molecule>Isoform 1</molecule>
    <subcellularLocation>
        <location evidence="1">Cell membrane</location>
        <topology evidence="1">Single-pass type I membrane protein</topology>
    </subcellularLocation>
</comment>
<comment type="subcellular location">
    <molecule>Isoform 2</molecule>
    <subcellularLocation>
        <location evidence="1">Cytoplasm</location>
    </subcellularLocation>
    <text evidence="1">Predominantly cytoplasmic. A small fraction is also associated with nucleus and membrane. Insulin can induce translocation to the membrane (By similarity).</text>
</comment>
<comment type="subcellular location">
    <molecule>Isoform 3</molecule>
    <subcellularLocation>
        <location evidence="1">Cytoplasm</location>
    </subcellularLocation>
</comment>
<comment type="alternative products">
    <event type="alternative promoter"/>
    <event type="alternative initiation"/>
    <isoform>
        <id>B2GV87-1</id>
        <name>1</name>
        <name>PTPeM</name>
        <name>RPTPe</name>
        <name>tm-PTPe</name>
        <sequence type="displayed"/>
    </isoform>
    <isoform>
        <id>B2GV87-2</id>
        <name>2</name>
        <name>PTPeC</name>
        <name>cyt-PTPe</name>
        <sequence type="described" ref="VSP_038489"/>
    </isoform>
    <isoform>
        <id>B2GV87-3</id>
        <name>3</name>
        <name>p67</name>
        <sequence type="described" ref="VSP_038488"/>
    </isoform>
</comment>
<comment type="tissue specificity">
    <text evidence="7 8">Isoform 1 is highly expressed in the brain, lung, spleen and testis. Isoform 2 is highly expressed in thymus, spleen and lung. Isoform 1 and isoform 2 are expressed in primary hepatocytes.</text>
</comment>
<comment type="domain">
    <text evidence="1">The tyrosine-protein phosphatase 2 domain (D2) mediates dimerization. The extreme N- and C- termini of the D2 domain act to inhibit dimerization and removal of these sequences increases dimerization and inhibits enzyme activity (By similarity).</text>
</comment>
<comment type="PTM">
    <text evidence="1">A catalytically active cytoplasmic form (p65) is produced by proteolytic cleavage of either isoform 1, isoform 2 or isoform 3.</text>
</comment>
<comment type="PTM">
    <text evidence="1">Isoform 1 and isoform 2 are phosphorylated on tyrosine residues by tyrosine kinase Neu.</text>
</comment>
<comment type="PTM">
    <text evidence="1">N-glycosylated.</text>
</comment>
<comment type="miscellaneous">
    <molecule>Isoform 1</molecule>
    <text>Produced by alternative promoter usage.</text>
</comment>
<comment type="miscellaneous">
    <molecule>Isoform 2</molecule>
    <text evidence="11">Produced by alternative promoter usage.</text>
</comment>
<comment type="miscellaneous">
    <molecule>Isoform 3</molecule>
    <text evidence="11">Produced by alternative initiation at Met-85 of isoform 1.</text>
</comment>
<comment type="similarity">
    <text evidence="11">Belongs to the protein-tyrosine phosphatase family. Receptor class 4 subfamily.</text>
</comment>
<comment type="sequence caution" evidence="11">
    <conflict type="erroneous initiation">
        <sequence resource="EMBL-CDS" id="AAI66573"/>
    </conflict>
</comment>
<evidence type="ECO:0000250" key="1"/>
<evidence type="ECO:0000250" key="2">
    <source>
        <dbReference type="UniProtKB" id="P23469"/>
    </source>
</evidence>
<evidence type="ECO:0000255" key="3"/>
<evidence type="ECO:0000255" key="4">
    <source>
        <dbReference type="PROSITE-ProRule" id="PRU00160"/>
    </source>
</evidence>
<evidence type="ECO:0000255" key="5">
    <source>
        <dbReference type="PROSITE-ProRule" id="PRU10044"/>
    </source>
</evidence>
<evidence type="ECO:0000256" key="6">
    <source>
        <dbReference type="SAM" id="MobiDB-lite"/>
    </source>
</evidence>
<evidence type="ECO:0000269" key="7">
    <source>
    </source>
</evidence>
<evidence type="ECO:0000269" key="8">
    <source>
    </source>
</evidence>
<evidence type="ECO:0000303" key="9">
    <source>
    </source>
</evidence>
<evidence type="ECO:0000303" key="10">
    <source ref="5"/>
</evidence>
<evidence type="ECO:0000305" key="11"/>
<reference key="1">
    <citation type="journal article" date="1996" name="Biochem. Biophys. Res. Commun.">
        <title>Molecular cloning of a novel cytoplasmic protein tyrosine phosphatase PTP epsilon.</title>
        <authorList>
            <person name="Nakamura K."/>
            <person name="Mizuno Y."/>
            <person name="Kikuchi K."/>
        </authorList>
    </citation>
    <scope>NUCLEOTIDE SEQUENCE [LARGE SCALE MRNA] (ISOFORM 2)</scope>
    <scope>NUCLEOTIDE SEQUENCE [LARGE SCALE MRNA] OF 1-297 (ISOFORM 1)</scope>
    <source>
        <tissue>Spleen</tissue>
    </source>
</reference>
<reference key="2">
    <citation type="journal article" date="1999" name="Eur. J. Biochem.">
        <title>Distinct promoters control transmembrane and cytosolic protein tyrosine phosphatase epsilon expression during macrophage differentiation.</title>
        <authorList>
            <person name="Tanuma N."/>
            <person name="Nakamura K."/>
            <person name="Kikuchi K."/>
        </authorList>
    </citation>
    <scope>NUCLEOTIDE SEQUENCE [GENOMIC DNA]</scope>
    <scope>ALTERNATIVE PROMOTER USAGE</scope>
    <scope>TISSUE SPECIFICITY</scope>
</reference>
<reference key="3">
    <citation type="submission" date="2005-07" db="EMBL/GenBank/DDBJ databases">
        <authorList>
            <person name="Mural R.J."/>
            <person name="Adams M.D."/>
            <person name="Myers E.W."/>
            <person name="Smith H.O."/>
            <person name="Venter J.C."/>
        </authorList>
    </citation>
    <scope>NUCLEOTIDE SEQUENCE [LARGE SCALE GENOMIC DNA]</scope>
    <source>
        <strain>Brown Norway</strain>
    </source>
</reference>
<reference key="4">
    <citation type="journal article" date="2004" name="Genome Res.">
        <title>The status, quality, and expansion of the NIH full-length cDNA project: the Mammalian Gene Collection (MGC).</title>
        <authorList>
            <consortium name="The MGC Project Team"/>
        </authorList>
    </citation>
    <scope>NUCLEOTIDE SEQUENCE [LARGE SCALE MRNA] (ISOFORM 1)</scope>
    <source>
        <tissue>Brain</tissue>
    </source>
</reference>
<reference key="5">
    <citation type="submission" date="2000-09" db="EMBL/GenBank/DDBJ databases">
        <authorList>
            <person name="Strausberg R.L."/>
        </authorList>
    </citation>
    <scope>NUCLEOTIDE SEQUENCE [LARGE SCALE MRNA] OF 1-131 (ISOFORM 3)</scope>
    <source>
        <tissue>Placenta</tissue>
    </source>
</reference>
<reference key="6">
    <citation type="journal article" date="2005" name="Zool. Sci.">
        <title>Receptor-type protein tyrosine phosphatase epsilon (PTPepsilonM) is a negative regulator of insulin signaling in primary hepatocytes and liver.</title>
        <authorList>
            <person name="Nakagawa Y."/>
            <person name="Aoki N."/>
            <person name="Aoyama K."/>
            <person name="Shimizu H."/>
            <person name="Shimano H."/>
            <person name="Yamada N."/>
            <person name="Miyazaki H."/>
        </authorList>
    </citation>
    <scope>FUNCTION (ISOFORM 1)</scope>
    <scope>TISSUE SPECIFICITY</scope>
</reference>